<feature type="chain" id="PRO_0000050863" description="Autophagy-related protein 18">
    <location>
        <begin position="1"/>
        <end position="505"/>
    </location>
</feature>
<feature type="repeat" description="WD 1">
    <location>
        <begin position="246"/>
        <end position="286"/>
    </location>
</feature>
<feature type="repeat" description="WD 2">
    <location>
        <begin position="291"/>
        <end position="330"/>
    </location>
</feature>
<feature type="region of interest" description="Disordered" evidence="3">
    <location>
        <begin position="328"/>
        <end position="380"/>
    </location>
</feature>
<feature type="short sequence motif" description="L/FRRG motif" evidence="2">
    <location>
        <begin position="287"/>
        <end position="291"/>
    </location>
</feature>
<feature type="compositionally biased region" description="Acidic residues" evidence="3">
    <location>
        <begin position="335"/>
        <end position="348"/>
    </location>
</feature>
<feature type="compositionally biased region" description="Low complexity" evidence="3">
    <location>
        <begin position="349"/>
        <end position="360"/>
    </location>
</feature>
<feature type="compositionally biased region" description="Basic and acidic residues" evidence="3">
    <location>
        <begin position="368"/>
        <end position="379"/>
    </location>
</feature>
<organism>
    <name type="scientific">Candida glabrata (strain ATCC 2001 / BCRC 20586 / JCM 3761 / NBRC 0622 / NRRL Y-65 / CBS 138)</name>
    <name type="common">Yeast</name>
    <name type="synonym">Nakaseomyces glabratus</name>
    <dbReference type="NCBI Taxonomy" id="284593"/>
    <lineage>
        <taxon>Eukaryota</taxon>
        <taxon>Fungi</taxon>
        <taxon>Dikarya</taxon>
        <taxon>Ascomycota</taxon>
        <taxon>Saccharomycotina</taxon>
        <taxon>Saccharomycetes</taxon>
        <taxon>Saccharomycetales</taxon>
        <taxon>Saccharomycetaceae</taxon>
        <taxon>Nakaseomyces</taxon>
    </lineage>
</organism>
<evidence type="ECO:0000250" key="1"/>
<evidence type="ECO:0000250" key="2">
    <source>
        <dbReference type="UniProtKB" id="P43601"/>
    </source>
</evidence>
<evidence type="ECO:0000256" key="3">
    <source>
        <dbReference type="SAM" id="MobiDB-lite"/>
    </source>
</evidence>
<evidence type="ECO:0000305" key="4"/>
<sequence length="505" mass="55550">MPNKAVSIYYLNFNQTGTCISMGTSNGFLIFNCAPFGKFYSEDSGGYGIVEMLFSTSLLALVGIGDQPMLSPRRLRIINTKKHSIICEVTFPTKILSVKMNRSRIVVVLKEQIYIYDINNMRLLHTIEIAPNPEGLVALSCNTDTNLLAYPSPPKVISSDINPNVNTNTINIARSKSEELIANSKDNNLQNKFGTTLEGQQNIDEDKAANGYQVDQNTDTAENDINSGDVIIYDMSTLQPLMVIEAHKGEIAALNFSFDGSLIATASEKGTIIRVFSTSSGAKLYQFRRGTYPTKIYSLSFSQDNRFLSVTCSSKTVHIFKLTKTGEERTSGGADDADSDDSGNENDGDNNSVGNGDVSSLLSDNDIESTREPYVDASRKTMGRMIRNSSQKLSRRAAKTLGQLFPIKVTSILEPSRHFASLKLPTDSNISGNVKTLCSIGNEMEVDKVEYPELFDGQDQGDRTKVTMLPIRVISSEGYLYNYVLDPERGGDCLLLSQYSTAIDQ</sequence>
<keyword id="KW-0072">Autophagy</keyword>
<keyword id="KW-0967">Endosome</keyword>
<keyword id="KW-0472">Membrane</keyword>
<keyword id="KW-0653">Protein transport</keyword>
<keyword id="KW-1185">Reference proteome</keyword>
<keyword id="KW-0677">Repeat</keyword>
<keyword id="KW-0813">Transport</keyword>
<keyword id="KW-0926">Vacuole</keyword>
<keyword id="KW-0853">WD repeat</keyword>
<gene>
    <name type="primary">ATG18</name>
    <name type="ordered locus">CAGL0K10692g</name>
</gene>
<protein>
    <recommendedName>
        <fullName>Autophagy-related protein 18</fullName>
    </recommendedName>
</protein>
<comment type="function">
    <text evidence="1">The PI(3,5)P2 regulatory complex regulates both the synthesis and turnover of phosphatidylinositol 3,5-bisphosphate (PtdIns(3,5)P2). Necessary for proper vacuole morphology. Plays an important role in osmotically-induced vacuole fragmentation. Required for cytoplasm to vacuole transport (Cvt) vesicle formation, pexophagy and starvation-induced autophagy. Involved in correct ATG9 trafficking to the pre-autophagosomal structure. Might also be involved in premeiotic DNA replication (By similarity).</text>
</comment>
<comment type="subunit">
    <text evidence="1">Component of the PI(3,5)P2 regulatory complex.</text>
</comment>
<comment type="subcellular location">
    <subcellularLocation>
        <location evidence="1">Preautophagosomal structure membrane</location>
        <topology evidence="1">Peripheral membrane protein</topology>
    </subcellularLocation>
    <subcellularLocation>
        <location evidence="1">Vacuole membrane</location>
        <topology evidence="1">Peripheral membrane protein</topology>
    </subcellularLocation>
    <subcellularLocation>
        <location evidence="1">Endosome membrane</location>
        <topology evidence="1">Peripheral membrane protein</topology>
    </subcellularLocation>
</comment>
<comment type="domain">
    <text evidence="1">The N-terminus might form a beta-propeller domain involved in specific binding to phosphatidylinositol 3,5-bisphosphate (PIP2), leading to the association of the protein to the membrane.</text>
</comment>
<comment type="domain">
    <text evidence="2">The L/FRRG motif is essential for the cytoplasm to vacuole transport (Cvt) pathway, for the recruitment of ATG8 and ATG16 to the PAS in nutrient-rich medium, and for its recruitment to and dissociation from the PAS under starvation conditions.</text>
</comment>
<comment type="similarity">
    <text evidence="4">Belongs to the WD repeat PROPPIN family.</text>
</comment>
<dbReference type="EMBL" id="CR380957">
    <property type="protein sequence ID" value="CAG61644.1"/>
    <property type="molecule type" value="Genomic_DNA"/>
</dbReference>
<dbReference type="RefSeq" id="XP_448681.1">
    <property type="nucleotide sequence ID" value="XM_448681.1"/>
</dbReference>
<dbReference type="SMR" id="Q6FM63"/>
<dbReference type="FunCoup" id="Q6FM63">
    <property type="interactions" value="594"/>
</dbReference>
<dbReference type="STRING" id="284593.Q6FM63"/>
<dbReference type="EnsemblFungi" id="CAGL0K10692g-T">
    <property type="protein sequence ID" value="CAGL0K10692g-T-p1"/>
    <property type="gene ID" value="CAGL0K10692g"/>
</dbReference>
<dbReference type="KEGG" id="cgr:2890104"/>
<dbReference type="CGD" id="CAL0134033">
    <property type="gene designation" value="CAGL0K10692g"/>
</dbReference>
<dbReference type="VEuPathDB" id="FungiDB:CAGL0K10692g"/>
<dbReference type="eggNOG" id="KOG2110">
    <property type="taxonomic scope" value="Eukaryota"/>
</dbReference>
<dbReference type="HOGENOM" id="CLU_025895_5_2_1"/>
<dbReference type="InParanoid" id="Q6FM63"/>
<dbReference type="OMA" id="KTMGRMI"/>
<dbReference type="Proteomes" id="UP000002428">
    <property type="component" value="Chromosome K"/>
</dbReference>
<dbReference type="GO" id="GO:0005829">
    <property type="term" value="C:cytosol"/>
    <property type="evidence" value="ECO:0007669"/>
    <property type="project" value="EnsemblFungi"/>
</dbReference>
<dbReference type="GO" id="GO:0010008">
    <property type="term" value="C:endosome membrane"/>
    <property type="evidence" value="ECO:0007669"/>
    <property type="project" value="UniProtKB-SubCell"/>
</dbReference>
<dbReference type="GO" id="GO:0000329">
    <property type="term" value="C:fungal-type vacuole membrane"/>
    <property type="evidence" value="ECO:0007669"/>
    <property type="project" value="EnsemblFungi"/>
</dbReference>
<dbReference type="GO" id="GO:0070772">
    <property type="term" value="C:PAS complex"/>
    <property type="evidence" value="ECO:0007669"/>
    <property type="project" value="EnsemblFungi"/>
</dbReference>
<dbReference type="GO" id="GO:0061908">
    <property type="term" value="C:phagophore"/>
    <property type="evidence" value="ECO:0007669"/>
    <property type="project" value="EnsemblFungi"/>
</dbReference>
<dbReference type="GO" id="GO:0034045">
    <property type="term" value="C:phagophore assembly site membrane"/>
    <property type="evidence" value="ECO:0007669"/>
    <property type="project" value="UniProtKB-SubCell"/>
</dbReference>
<dbReference type="GO" id="GO:0080025">
    <property type="term" value="F:phosphatidylinositol-3,5-bisphosphate binding"/>
    <property type="evidence" value="ECO:0007669"/>
    <property type="project" value="EnsemblFungi"/>
</dbReference>
<dbReference type="GO" id="GO:0032266">
    <property type="term" value="F:phosphatidylinositol-3-phosphate binding"/>
    <property type="evidence" value="ECO:0007669"/>
    <property type="project" value="EnsemblFungi"/>
</dbReference>
<dbReference type="GO" id="GO:0070273">
    <property type="term" value="F:phosphatidylinositol-4-phosphate binding"/>
    <property type="evidence" value="ECO:0007669"/>
    <property type="project" value="EnsemblFungi"/>
</dbReference>
<dbReference type="GO" id="GO:0043130">
    <property type="term" value="F:ubiquitin binding"/>
    <property type="evidence" value="ECO:0007669"/>
    <property type="project" value="EnsemblFungi"/>
</dbReference>
<dbReference type="GO" id="GO:0032258">
    <property type="term" value="P:cytoplasm to vacuole targeting by the Cvt pathway"/>
    <property type="evidence" value="ECO:0007669"/>
    <property type="project" value="EnsemblFungi"/>
</dbReference>
<dbReference type="GO" id="GO:0045324">
    <property type="term" value="P:late endosome to vacuole transport"/>
    <property type="evidence" value="ECO:0007669"/>
    <property type="project" value="EnsemblFungi"/>
</dbReference>
<dbReference type="GO" id="GO:0000425">
    <property type="term" value="P:pexophagy"/>
    <property type="evidence" value="ECO:0007669"/>
    <property type="project" value="EnsemblFungi"/>
</dbReference>
<dbReference type="GO" id="GO:0034727">
    <property type="term" value="P:piecemeal microautophagy of the nucleus"/>
    <property type="evidence" value="ECO:0007669"/>
    <property type="project" value="EnsemblFungi"/>
</dbReference>
<dbReference type="GO" id="GO:0044090">
    <property type="term" value="P:positive regulation of vacuole organization"/>
    <property type="evidence" value="ECO:0007669"/>
    <property type="project" value="EnsemblFungi"/>
</dbReference>
<dbReference type="GO" id="GO:0006624">
    <property type="term" value="P:vacuolar protein processing"/>
    <property type="evidence" value="ECO:0007669"/>
    <property type="project" value="EnsemblFungi"/>
</dbReference>
<dbReference type="Gene3D" id="2.130.10.10">
    <property type="entry name" value="YVTN repeat-like/Quinoprotein amine dehydrogenase"/>
    <property type="match status" value="1"/>
</dbReference>
<dbReference type="InterPro" id="IPR048720">
    <property type="entry name" value="PROPPIN"/>
</dbReference>
<dbReference type="InterPro" id="IPR015943">
    <property type="entry name" value="WD40/YVTN_repeat-like_dom_sf"/>
</dbReference>
<dbReference type="InterPro" id="IPR036322">
    <property type="entry name" value="WD40_repeat_dom_sf"/>
</dbReference>
<dbReference type="InterPro" id="IPR001680">
    <property type="entry name" value="WD40_rpt"/>
</dbReference>
<dbReference type="PANTHER" id="PTHR11227">
    <property type="entry name" value="WD-REPEAT PROTEIN INTERACTING WITH PHOSPHOINOSIDES WIPI -RELATED"/>
    <property type="match status" value="1"/>
</dbReference>
<dbReference type="Pfam" id="PF21032">
    <property type="entry name" value="PROPPIN"/>
    <property type="match status" value="2"/>
</dbReference>
<dbReference type="SMART" id="SM00320">
    <property type="entry name" value="WD40"/>
    <property type="match status" value="2"/>
</dbReference>
<dbReference type="SUPFAM" id="SSF50978">
    <property type="entry name" value="WD40 repeat-like"/>
    <property type="match status" value="1"/>
</dbReference>
<proteinExistence type="inferred from homology"/>
<reference key="1">
    <citation type="journal article" date="2004" name="Nature">
        <title>Genome evolution in yeasts.</title>
        <authorList>
            <person name="Dujon B."/>
            <person name="Sherman D."/>
            <person name="Fischer G."/>
            <person name="Durrens P."/>
            <person name="Casaregola S."/>
            <person name="Lafontaine I."/>
            <person name="de Montigny J."/>
            <person name="Marck C."/>
            <person name="Neuveglise C."/>
            <person name="Talla E."/>
            <person name="Goffard N."/>
            <person name="Frangeul L."/>
            <person name="Aigle M."/>
            <person name="Anthouard V."/>
            <person name="Babour A."/>
            <person name="Barbe V."/>
            <person name="Barnay S."/>
            <person name="Blanchin S."/>
            <person name="Beckerich J.-M."/>
            <person name="Beyne E."/>
            <person name="Bleykasten C."/>
            <person name="Boisrame A."/>
            <person name="Boyer J."/>
            <person name="Cattolico L."/>
            <person name="Confanioleri F."/>
            <person name="de Daruvar A."/>
            <person name="Despons L."/>
            <person name="Fabre E."/>
            <person name="Fairhead C."/>
            <person name="Ferry-Dumazet H."/>
            <person name="Groppi A."/>
            <person name="Hantraye F."/>
            <person name="Hennequin C."/>
            <person name="Jauniaux N."/>
            <person name="Joyet P."/>
            <person name="Kachouri R."/>
            <person name="Kerrest A."/>
            <person name="Koszul R."/>
            <person name="Lemaire M."/>
            <person name="Lesur I."/>
            <person name="Ma L."/>
            <person name="Muller H."/>
            <person name="Nicaud J.-M."/>
            <person name="Nikolski M."/>
            <person name="Oztas S."/>
            <person name="Ozier-Kalogeropoulos O."/>
            <person name="Pellenz S."/>
            <person name="Potier S."/>
            <person name="Richard G.-F."/>
            <person name="Straub M.-L."/>
            <person name="Suleau A."/>
            <person name="Swennen D."/>
            <person name="Tekaia F."/>
            <person name="Wesolowski-Louvel M."/>
            <person name="Westhof E."/>
            <person name="Wirth B."/>
            <person name="Zeniou-Meyer M."/>
            <person name="Zivanovic Y."/>
            <person name="Bolotin-Fukuhara M."/>
            <person name="Thierry A."/>
            <person name="Bouchier C."/>
            <person name="Caudron B."/>
            <person name="Scarpelli C."/>
            <person name="Gaillardin C."/>
            <person name="Weissenbach J."/>
            <person name="Wincker P."/>
            <person name="Souciet J.-L."/>
        </authorList>
    </citation>
    <scope>NUCLEOTIDE SEQUENCE [LARGE SCALE GENOMIC DNA]</scope>
    <source>
        <strain>ATCC 2001 / BCRC 20586 / JCM 3761 / NBRC 0622 / NRRL Y-65 / CBS 138</strain>
    </source>
</reference>
<name>ATG18_CANGA</name>
<accession>Q6FM63</accession>